<dbReference type="EMBL" id="S83227">
    <property type="protein sequence ID" value="AAB49508.2"/>
    <property type="molecule type" value="mRNA"/>
</dbReference>
<dbReference type="SMR" id="P79373"/>
<dbReference type="HOGENOM" id="CLU_014081_0_0_1"/>
<dbReference type="TreeFam" id="TF106510"/>
<dbReference type="GO" id="GO:0005737">
    <property type="term" value="C:cytoplasm"/>
    <property type="evidence" value="ECO:0007669"/>
    <property type="project" value="UniProtKB-SubCell"/>
</dbReference>
<dbReference type="GO" id="GO:0005634">
    <property type="term" value="C:nucleus"/>
    <property type="evidence" value="ECO:0007669"/>
    <property type="project" value="UniProtKB-SubCell"/>
</dbReference>
<dbReference type="GO" id="GO:0003677">
    <property type="term" value="F:DNA binding"/>
    <property type="evidence" value="ECO:0007669"/>
    <property type="project" value="UniProtKB-KW"/>
</dbReference>
<dbReference type="GO" id="GO:0005496">
    <property type="term" value="F:steroid binding"/>
    <property type="evidence" value="ECO:0007669"/>
    <property type="project" value="UniProtKB-KW"/>
</dbReference>
<dbReference type="GO" id="GO:0008270">
    <property type="term" value="F:zinc ion binding"/>
    <property type="evidence" value="ECO:0007669"/>
    <property type="project" value="UniProtKB-KW"/>
</dbReference>
<dbReference type="Gene3D" id="1.10.565.10">
    <property type="entry name" value="Retinoid X Receptor"/>
    <property type="match status" value="1"/>
</dbReference>
<dbReference type="InterPro" id="IPR035500">
    <property type="entry name" value="NHR-like_dom_sf"/>
</dbReference>
<dbReference type="InterPro" id="IPR000536">
    <property type="entry name" value="Nucl_hrmn_rcpt_lig-bd"/>
</dbReference>
<dbReference type="InterPro" id="IPR050200">
    <property type="entry name" value="Nuclear_hormone_rcpt_NR3"/>
</dbReference>
<dbReference type="InterPro" id="IPR001723">
    <property type="entry name" value="Nuclear_hrmn_rcpt"/>
</dbReference>
<dbReference type="PANTHER" id="PTHR48092">
    <property type="entry name" value="KNIRPS-RELATED PROTEIN-RELATED"/>
    <property type="match status" value="1"/>
</dbReference>
<dbReference type="Pfam" id="PF00104">
    <property type="entry name" value="Hormone_recep"/>
    <property type="match status" value="1"/>
</dbReference>
<dbReference type="PRINTS" id="PR00398">
    <property type="entry name" value="STRDHORMONER"/>
</dbReference>
<dbReference type="SUPFAM" id="SSF48508">
    <property type="entry name" value="Nuclear receptor ligand-binding domain"/>
    <property type="match status" value="1"/>
</dbReference>
<dbReference type="PROSITE" id="PS51843">
    <property type="entry name" value="NR_LBD"/>
    <property type="match status" value="1"/>
</dbReference>
<protein>
    <recommendedName>
        <fullName>Progesterone receptor</fullName>
        <shortName>PR</shortName>
    </recommendedName>
    <alternativeName>
        <fullName>Nuclear receptor subfamily 3 group C member 3</fullName>
    </alternativeName>
</protein>
<keyword id="KW-0963">Cytoplasm</keyword>
<keyword id="KW-0238">DNA-binding</keyword>
<keyword id="KW-0446">Lipid-binding</keyword>
<keyword id="KW-0449">Lipoprotein</keyword>
<keyword id="KW-0479">Metal-binding</keyword>
<keyword id="KW-0539">Nucleus</keyword>
<keyword id="KW-0564">Palmitate</keyword>
<keyword id="KW-0597">Phosphoprotein</keyword>
<keyword id="KW-0675">Receptor</keyword>
<keyword id="KW-0754">Steroid-binding</keyword>
<keyword id="KW-0804">Transcription</keyword>
<keyword id="KW-0805">Transcription regulation</keyword>
<keyword id="KW-0832">Ubl conjugation</keyword>
<keyword id="KW-0862">Zinc</keyword>
<keyword id="KW-0863">Zinc-finger</keyword>
<organism>
    <name type="scientific">Notamacropus eugenii</name>
    <name type="common">Tammar wallaby</name>
    <name type="synonym">Macropus eugenii</name>
    <dbReference type="NCBI Taxonomy" id="9315"/>
    <lineage>
        <taxon>Eukaryota</taxon>
        <taxon>Metazoa</taxon>
        <taxon>Chordata</taxon>
        <taxon>Craniata</taxon>
        <taxon>Vertebrata</taxon>
        <taxon>Euteleostomi</taxon>
        <taxon>Mammalia</taxon>
        <taxon>Metatheria</taxon>
        <taxon>Diprotodontia</taxon>
        <taxon>Macropodidae</taxon>
        <taxon>Notamacropus</taxon>
    </lineage>
</organism>
<evidence type="ECO:0000250" key="1"/>
<evidence type="ECO:0000250" key="2">
    <source>
        <dbReference type="UniProtKB" id="P06401"/>
    </source>
</evidence>
<evidence type="ECO:0000250" key="3">
    <source>
        <dbReference type="UniProtKB" id="Q00175"/>
    </source>
</evidence>
<evidence type="ECO:0000255" key="4">
    <source>
        <dbReference type="PROSITE-ProRule" id="PRU00407"/>
    </source>
</evidence>
<evidence type="ECO:0000255" key="5">
    <source>
        <dbReference type="PROSITE-ProRule" id="PRU01189"/>
    </source>
</evidence>
<evidence type="ECO:0000305" key="6"/>
<proteinExistence type="evidence at transcript level"/>
<gene>
    <name type="primary">PGR</name>
    <name type="synonym">NR3C3</name>
</gene>
<reference key="1">
    <citation type="journal article" date="1996" name="Mol. Cell. Endocrinol.">
        <title>The molecular basis of RU486 resistance in the Tammar Wallaby, Macropus eugenii.</title>
        <authorList>
            <person name="Lim-Tio S.S."/>
            <person name="Keightley M.C."/>
            <person name="Fletcher T.P."/>
            <person name="Fuller P.J."/>
        </authorList>
    </citation>
    <scope>NUCLEOTIDE SEQUENCE [MRNA]</scope>
    <source>
        <tissue>Uterus</tissue>
    </source>
</reference>
<name>PRGR_NOTEU</name>
<feature type="chain" id="PRO_0000053694" description="Progesterone receptor">
    <location>
        <begin position="1" status="less than"/>
        <end position="180" status="greater than"/>
    </location>
</feature>
<feature type="domain" description="NR LBD" evidence="5">
    <location>
        <begin position="63"/>
        <end position="180" status="greater than"/>
    </location>
</feature>
<feature type="DNA-binding region" description="Nuclear receptor" evidence="4">
    <location>
        <begin position="1" status="less than"/>
        <end position="16"/>
    </location>
</feature>
<feature type="zinc finger region" description="NR C4-type" evidence="4">
    <location>
        <begin position="1" status="less than"/>
        <end position="11"/>
    </location>
</feature>
<feature type="region of interest" description="AF2; mediates transcriptional activation" evidence="2">
    <location>
        <begin position="71"/>
        <end position="180" status="greater than"/>
    </location>
</feature>
<feature type="binding site" evidence="2">
    <location>
        <position position="150"/>
    </location>
    <ligand>
        <name>progesterone</name>
        <dbReference type="ChEBI" id="CHEBI:17026"/>
    </ligand>
</feature>
<feature type="modified residue" description="Phosphoserine" evidence="2">
    <location>
        <position position="60"/>
    </location>
</feature>
<feature type="non-terminal residue">
    <location>
        <position position="1"/>
    </location>
</feature>
<feature type="non-terminal residue">
    <location>
        <position position="180"/>
    </location>
</feature>
<comment type="function">
    <text evidence="2">The steroid hormones and their receptors are involved in the regulation of eukaryotic gene expression and affect cellular proliferation and differentiation in target tissues. Transcriptional activator of several progesteron-dependent promoters in a variety of cell types. Involved in activation of SRC-dependent MAPK signaling on hormone stimulation.</text>
</comment>
<comment type="subunit">
    <text evidence="2 3">Interacts with SMARD1 and UNC45A. Interacts with CUEDC2; the interaction promotes ubiquitination, decreases sumoylation, and represses transcriptional activity. Interacts with PIAS3; the interaction promotes sumoylation of PR in a hormone-dependent manner, inhibits DNA-binding, and alters nuclear export. Interacts with SP1; the interaction requires ligand-induced phosphorylation by ERK1/2-MAPK. Interacts with PRMT2. Interacts with NCOA2 and NCOA1. Interacts with KLF9. Interacts with GTF2B (By similarity).</text>
</comment>
<comment type="subcellular location">
    <subcellularLocation>
        <location>Nucleus</location>
    </subcellularLocation>
    <subcellularLocation>
        <location>Cytoplasm</location>
    </subcellularLocation>
    <text evidence="1">Nucleoplasmic shuttling is both hormone- and cell cycle-dependent. On hormone stimulation, retained in the cytoplasm in the G(1) and G(2)/M phases (By similarity).</text>
</comment>
<comment type="domain">
    <text evidence="1">Composed of three domains: a modulating N-terminal domain, a DNA-binding domain and a C-terminal ligand-binding domain.</text>
</comment>
<comment type="PTM">
    <text evidence="1">Phosphorylated on multiple serine sites. Several of these sites are hormone-dependent (By similarity).</text>
</comment>
<comment type="PTM">
    <text evidence="1">Sumoylation is hormone-dependent and represses transcriptional activity. Sumoylation on all three sites is enhanced by PIAS3. Desumoylated by SENP1. Sumoylation is repressed by ubiquitination and modulated by phosphorylation (By similarity).</text>
</comment>
<comment type="PTM">
    <text evidence="1">Ubiquitination is hormone-dependent and represses sumoylation.</text>
</comment>
<comment type="PTM">
    <text evidence="1">Palmitoylated by ZDHHC7 and ZDHHC21. Palmitoylation is required for plasma membrane targeting and for rapid intracellular signaling via ERK and AKT kinases and cAMP generation (By similarity).</text>
</comment>
<comment type="similarity">
    <text evidence="6">Belongs to the nuclear hormone receptor family. NR3 subfamily.</text>
</comment>
<accession>P79373</accession>
<sequence>KNCPACRLRKCCQAGMVLGGRKFKKFNKVRVMRALDAVAVPQPVGLPNESQALTQRITFSPNQEIQLFPPLINLLLSIEPDVIYAGYDNTKPETSSSLLTSLNHLAERQLLSVVKWSKSLPGFRNLHIDDQITLIQYSWMSLMVFGLGWRSYKHVSGQMLYFAPDLILNEQRMKESSFYS</sequence>